<feature type="chain" id="PRO_0000077024" description="Uncharacterized protein in nifU 5'region">
    <location>
        <begin position="1"/>
        <end position="125"/>
    </location>
</feature>
<name>YNIU_AZOBR</name>
<organism>
    <name type="scientific">Azospirillum brasilense</name>
    <dbReference type="NCBI Taxonomy" id="192"/>
    <lineage>
        <taxon>Bacteria</taxon>
        <taxon>Pseudomonadati</taxon>
        <taxon>Pseudomonadota</taxon>
        <taxon>Alphaproteobacteria</taxon>
        <taxon>Rhodospirillales</taxon>
        <taxon>Azospirillaceae</taxon>
        <taxon>Azospirillum</taxon>
    </lineage>
</organism>
<dbReference type="EMBL" id="U26427">
    <property type="protein sequence ID" value="AAC46175.1"/>
    <property type="molecule type" value="Genomic_DNA"/>
</dbReference>
<dbReference type="SMR" id="Q43895"/>
<dbReference type="GO" id="GO:0051537">
    <property type="term" value="F:2 iron, 2 sulfur cluster binding"/>
    <property type="evidence" value="ECO:0007669"/>
    <property type="project" value="UniProtKB-ARBA"/>
</dbReference>
<dbReference type="GO" id="GO:0030674">
    <property type="term" value="F:protein-macromolecule adaptor activity"/>
    <property type="evidence" value="ECO:0007669"/>
    <property type="project" value="TreeGrafter"/>
</dbReference>
<dbReference type="GO" id="GO:0016226">
    <property type="term" value="P:iron-sulfur cluster assembly"/>
    <property type="evidence" value="ECO:0007669"/>
    <property type="project" value="InterPro"/>
</dbReference>
<dbReference type="Gene3D" id="2.60.300.12">
    <property type="entry name" value="HesB-like domain"/>
    <property type="match status" value="1"/>
</dbReference>
<dbReference type="InterPro" id="IPR000361">
    <property type="entry name" value="FeS_biogenesis"/>
</dbReference>
<dbReference type="InterPro" id="IPR016092">
    <property type="entry name" value="FeS_cluster_insertion"/>
</dbReference>
<dbReference type="InterPro" id="IPR017870">
    <property type="entry name" value="FeS_cluster_insertion_CS"/>
</dbReference>
<dbReference type="InterPro" id="IPR035903">
    <property type="entry name" value="HesB-like_dom_sf"/>
</dbReference>
<dbReference type="InterPro" id="IPR031108">
    <property type="entry name" value="ISCA_plant_cyanobact"/>
</dbReference>
<dbReference type="NCBIfam" id="TIGR00049">
    <property type="entry name" value="iron-sulfur cluster assembly accessory protein"/>
    <property type="match status" value="1"/>
</dbReference>
<dbReference type="PANTHER" id="PTHR47265">
    <property type="entry name" value="IRON-SULFUR ASSEMBLY PROTEIN ISCA, CHLOROPLASTIC"/>
    <property type="match status" value="1"/>
</dbReference>
<dbReference type="PANTHER" id="PTHR47265:SF1">
    <property type="entry name" value="IRON-SULFUR ASSEMBLY PROTEIN ISCA, CHLOROPLASTIC"/>
    <property type="match status" value="1"/>
</dbReference>
<dbReference type="Pfam" id="PF01521">
    <property type="entry name" value="Fe-S_biosyn"/>
    <property type="match status" value="1"/>
</dbReference>
<dbReference type="SUPFAM" id="SSF89360">
    <property type="entry name" value="HesB-like domain"/>
    <property type="match status" value="1"/>
</dbReference>
<dbReference type="PROSITE" id="PS01152">
    <property type="entry name" value="HESB"/>
    <property type="match status" value="1"/>
</dbReference>
<sequence>MVTLTDAAVNTLELAVTGEVRRRRGRLRIAVADGGCAGHKYQMGLEATAGDDVLTFGPVTIFVDPTSQPFLTGVVVDFVEGVEGAGFKFDNPNATGSCGCGKSFSAGPGGSCSSAPAPGGCGTAH</sequence>
<proteinExistence type="inferred from homology"/>
<accession>Q43895</accession>
<evidence type="ECO:0000305" key="1"/>
<protein>
    <recommendedName>
        <fullName>Uncharacterized protein in nifU 5'region</fullName>
    </recommendedName>
    <alternativeName>
        <fullName>ORF2</fullName>
    </alternativeName>
</protein>
<reference key="1">
    <citation type="submission" date="1995-06" db="EMBL/GenBank/DDBJ databases">
        <authorList>
            <person name="Frazzon J.S."/>
            <person name="Schrank I.S."/>
        </authorList>
    </citation>
    <scope>NUCLEOTIDE SEQUENCE [GENOMIC DNA]</scope>
</reference>
<comment type="similarity">
    <text evidence="1">Belongs to the HesB/IscA family.</text>
</comment>